<accession>A5ELK2</accession>
<gene>
    <name evidence="1" type="primary">rplQ</name>
    <name type="ordered locus">BBta_5045</name>
</gene>
<feature type="chain" id="PRO_1000055779" description="Large ribosomal subunit protein bL17">
    <location>
        <begin position="1"/>
        <end position="137"/>
    </location>
</feature>
<dbReference type="EMBL" id="CP000494">
    <property type="protein sequence ID" value="ABQ37046.1"/>
    <property type="molecule type" value="Genomic_DNA"/>
</dbReference>
<dbReference type="RefSeq" id="WP_006611863.1">
    <property type="nucleotide sequence ID" value="NC_009485.1"/>
</dbReference>
<dbReference type="SMR" id="A5ELK2"/>
<dbReference type="STRING" id="288000.BBta_5045"/>
<dbReference type="KEGG" id="bbt:BBta_5045"/>
<dbReference type="eggNOG" id="COG0203">
    <property type="taxonomic scope" value="Bacteria"/>
</dbReference>
<dbReference type="HOGENOM" id="CLU_074407_2_0_5"/>
<dbReference type="OrthoDB" id="9809073at2"/>
<dbReference type="Proteomes" id="UP000000246">
    <property type="component" value="Chromosome"/>
</dbReference>
<dbReference type="GO" id="GO:0022625">
    <property type="term" value="C:cytosolic large ribosomal subunit"/>
    <property type="evidence" value="ECO:0007669"/>
    <property type="project" value="TreeGrafter"/>
</dbReference>
<dbReference type="GO" id="GO:0003735">
    <property type="term" value="F:structural constituent of ribosome"/>
    <property type="evidence" value="ECO:0007669"/>
    <property type="project" value="InterPro"/>
</dbReference>
<dbReference type="GO" id="GO:0006412">
    <property type="term" value="P:translation"/>
    <property type="evidence" value="ECO:0007669"/>
    <property type="project" value="UniProtKB-UniRule"/>
</dbReference>
<dbReference type="FunFam" id="3.90.1030.10:FF:000001">
    <property type="entry name" value="50S ribosomal protein L17"/>
    <property type="match status" value="1"/>
</dbReference>
<dbReference type="Gene3D" id="3.90.1030.10">
    <property type="entry name" value="Ribosomal protein L17"/>
    <property type="match status" value="1"/>
</dbReference>
<dbReference type="HAMAP" id="MF_01368">
    <property type="entry name" value="Ribosomal_bL17"/>
    <property type="match status" value="1"/>
</dbReference>
<dbReference type="InterPro" id="IPR000456">
    <property type="entry name" value="Ribosomal_bL17"/>
</dbReference>
<dbReference type="InterPro" id="IPR047859">
    <property type="entry name" value="Ribosomal_bL17_CS"/>
</dbReference>
<dbReference type="InterPro" id="IPR036373">
    <property type="entry name" value="Ribosomal_bL17_sf"/>
</dbReference>
<dbReference type="NCBIfam" id="TIGR00059">
    <property type="entry name" value="L17"/>
    <property type="match status" value="1"/>
</dbReference>
<dbReference type="PANTHER" id="PTHR14413:SF16">
    <property type="entry name" value="LARGE RIBOSOMAL SUBUNIT PROTEIN BL17M"/>
    <property type="match status" value="1"/>
</dbReference>
<dbReference type="PANTHER" id="PTHR14413">
    <property type="entry name" value="RIBOSOMAL PROTEIN L17"/>
    <property type="match status" value="1"/>
</dbReference>
<dbReference type="Pfam" id="PF01196">
    <property type="entry name" value="Ribosomal_L17"/>
    <property type="match status" value="1"/>
</dbReference>
<dbReference type="SUPFAM" id="SSF64263">
    <property type="entry name" value="Prokaryotic ribosomal protein L17"/>
    <property type="match status" value="1"/>
</dbReference>
<dbReference type="PROSITE" id="PS01167">
    <property type="entry name" value="RIBOSOMAL_L17"/>
    <property type="match status" value="1"/>
</dbReference>
<comment type="subunit">
    <text evidence="1">Part of the 50S ribosomal subunit. Contacts protein L32.</text>
</comment>
<comment type="similarity">
    <text evidence="1">Belongs to the bacterial ribosomal protein bL17 family.</text>
</comment>
<keyword id="KW-1185">Reference proteome</keyword>
<keyword id="KW-0687">Ribonucleoprotein</keyword>
<keyword id="KW-0689">Ribosomal protein</keyword>
<name>RL17_BRASB</name>
<proteinExistence type="inferred from homology"/>
<sequence length="137" mass="15357">MRHGKVHRKLNRTAEHRKAMFANMCAALIKHEQIVTTLPKAKELRPIVEKLVTLGKKGGLALRRQAIAEMRDVDQVKKLFDVLAPRYKDRNGGYTRIIKAGFRYGDNAAMAVIEFVDRDVDAKGQDSGPVQETSEAA</sequence>
<protein>
    <recommendedName>
        <fullName evidence="1">Large ribosomal subunit protein bL17</fullName>
    </recommendedName>
    <alternativeName>
        <fullName evidence="2">50S ribosomal protein L17</fullName>
    </alternativeName>
</protein>
<evidence type="ECO:0000255" key="1">
    <source>
        <dbReference type="HAMAP-Rule" id="MF_01368"/>
    </source>
</evidence>
<evidence type="ECO:0000305" key="2"/>
<organism>
    <name type="scientific">Bradyrhizobium sp. (strain BTAi1 / ATCC BAA-1182)</name>
    <dbReference type="NCBI Taxonomy" id="288000"/>
    <lineage>
        <taxon>Bacteria</taxon>
        <taxon>Pseudomonadati</taxon>
        <taxon>Pseudomonadota</taxon>
        <taxon>Alphaproteobacteria</taxon>
        <taxon>Hyphomicrobiales</taxon>
        <taxon>Nitrobacteraceae</taxon>
        <taxon>Bradyrhizobium</taxon>
    </lineage>
</organism>
<reference key="1">
    <citation type="journal article" date="2007" name="Science">
        <title>Legumes symbioses: absence of nod genes in photosynthetic bradyrhizobia.</title>
        <authorList>
            <person name="Giraud E."/>
            <person name="Moulin L."/>
            <person name="Vallenet D."/>
            <person name="Barbe V."/>
            <person name="Cytryn E."/>
            <person name="Avarre J.-C."/>
            <person name="Jaubert M."/>
            <person name="Simon D."/>
            <person name="Cartieaux F."/>
            <person name="Prin Y."/>
            <person name="Bena G."/>
            <person name="Hannibal L."/>
            <person name="Fardoux J."/>
            <person name="Kojadinovic M."/>
            <person name="Vuillet L."/>
            <person name="Lajus A."/>
            <person name="Cruveiller S."/>
            <person name="Rouy Z."/>
            <person name="Mangenot S."/>
            <person name="Segurens B."/>
            <person name="Dossat C."/>
            <person name="Franck W.L."/>
            <person name="Chang W.-S."/>
            <person name="Saunders E."/>
            <person name="Bruce D."/>
            <person name="Richardson P."/>
            <person name="Normand P."/>
            <person name="Dreyfus B."/>
            <person name="Pignol D."/>
            <person name="Stacey G."/>
            <person name="Emerich D."/>
            <person name="Vermeglio A."/>
            <person name="Medigue C."/>
            <person name="Sadowsky M."/>
        </authorList>
    </citation>
    <scope>NUCLEOTIDE SEQUENCE [LARGE SCALE GENOMIC DNA]</scope>
    <source>
        <strain>BTAi1 / ATCC BAA-1182</strain>
    </source>
</reference>